<gene>
    <name evidence="1" type="primary">hisF</name>
    <name type="ordered locus">Paes_1612</name>
</gene>
<feature type="chain" id="PRO_1000190591" description="Imidazole glycerol phosphate synthase subunit HisF">
    <location>
        <begin position="1"/>
        <end position="251"/>
    </location>
</feature>
<feature type="active site" evidence="1">
    <location>
        <position position="11"/>
    </location>
</feature>
<feature type="active site" evidence="1">
    <location>
        <position position="130"/>
    </location>
</feature>
<dbReference type="EC" id="4.3.2.10" evidence="1"/>
<dbReference type="EMBL" id="CP001108">
    <property type="protein sequence ID" value="ACF46630.1"/>
    <property type="molecule type" value="Genomic_DNA"/>
</dbReference>
<dbReference type="RefSeq" id="WP_012506163.1">
    <property type="nucleotide sequence ID" value="NC_011059.1"/>
</dbReference>
<dbReference type="SMR" id="B4S9G0"/>
<dbReference type="STRING" id="290512.Paes_1612"/>
<dbReference type="KEGG" id="paa:Paes_1612"/>
<dbReference type="eggNOG" id="COG0107">
    <property type="taxonomic scope" value="Bacteria"/>
</dbReference>
<dbReference type="HOGENOM" id="CLU_048577_4_0_10"/>
<dbReference type="UniPathway" id="UPA00031">
    <property type="reaction ID" value="UER00010"/>
</dbReference>
<dbReference type="Proteomes" id="UP000002725">
    <property type="component" value="Chromosome"/>
</dbReference>
<dbReference type="GO" id="GO:0005737">
    <property type="term" value="C:cytoplasm"/>
    <property type="evidence" value="ECO:0007669"/>
    <property type="project" value="UniProtKB-SubCell"/>
</dbReference>
<dbReference type="GO" id="GO:0000107">
    <property type="term" value="F:imidazoleglycerol-phosphate synthase activity"/>
    <property type="evidence" value="ECO:0007669"/>
    <property type="project" value="UniProtKB-UniRule"/>
</dbReference>
<dbReference type="GO" id="GO:0016829">
    <property type="term" value="F:lyase activity"/>
    <property type="evidence" value="ECO:0007669"/>
    <property type="project" value="UniProtKB-KW"/>
</dbReference>
<dbReference type="GO" id="GO:0000105">
    <property type="term" value="P:L-histidine biosynthetic process"/>
    <property type="evidence" value="ECO:0007669"/>
    <property type="project" value="UniProtKB-UniRule"/>
</dbReference>
<dbReference type="CDD" id="cd04731">
    <property type="entry name" value="HisF"/>
    <property type="match status" value="1"/>
</dbReference>
<dbReference type="FunFam" id="3.20.20.70:FF:000006">
    <property type="entry name" value="Imidazole glycerol phosphate synthase subunit HisF"/>
    <property type="match status" value="1"/>
</dbReference>
<dbReference type="Gene3D" id="3.20.20.70">
    <property type="entry name" value="Aldolase class I"/>
    <property type="match status" value="1"/>
</dbReference>
<dbReference type="HAMAP" id="MF_01013">
    <property type="entry name" value="HisF"/>
    <property type="match status" value="1"/>
</dbReference>
<dbReference type="InterPro" id="IPR013785">
    <property type="entry name" value="Aldolase_TIM"/>
</dbReference>
<dbReference type="InterPro" id="IPR006062">
    <property type="entry name" value="His_biosynth"/>
</dbReference>
<dbReference type="InterPro" id="IPR004651">
    <property type="entry name" value="HisF"/>
</dbReference>
<dbReference type="InterPro" id="IPR050064">
    <property type="entry name" value="IGPS_HisA/HisF"/>
</dbReference>
<dbReference type="InterPro" id="IPR011060">
    <property type="entry name" value="RibuloseP-bd_barrel"/>
</dbReference>
<dbReference type="NCBIfam" id="TIGR00735">
    <property type="entry name" value="hisF"/>
    <property type="match status" value="1"/>
</dbReference>
<dbReference type="PANTHER" id="PTHR21235:SF2">
    <property type="entry name" value="IMIDAZOLE GLYCEROL PHOSPHATE SYNTHASE HISHF"/>
    <property type="match status" value="1"/>
</dbReference>
<dbReference type="PANTHER" id="PTHR21235">
    <property type="entry name" value="IMIDAZOLE GLYCEROL PHOSPHATE SYNTHASE SUBUNIT HISF/H IGP SYNTHASE SUBUNIT HISF/H"/>
    <property type="match status" value="1"/>
</dbReference>
<dbReference type="Pfam" id="PF00977">
    <property type="entry name" value="His_biosynth"/>
    <property type="match status" value="1"/>
</dbReference>
<dbReference type="SUPFAM" id="SSF51366">
    <property type="entry name" value="Ribulose-phoshate binding barrel"/>
    <property type="match status" value="1"/>
</dbReference>
<keyword id="KW-0028">Amino-acid biosynthesis</keyword>
<keyword id="KW-0963">Cytoplasm</keyword>
<keyword id="KW-0368">Histidine biosynthesis</keyword>
<keyword id="KW-0456">Lyase</keyword>
<accession>B4S9G0</accession>
<proteinExistence type="inferred from homology"/>
<organism>
    <name type="scientific">Prosthecochloris aestuarii (strain DSM 271 / SK 413)</name>
    <dbReference type="NCBI Taxonomy" id="290512"/>
    <lineage>
        <taxon>Bacteria</taxon>
        <taxon>Pseudomonadati</taxon>
        <taxon>Chlorobiota</taxon>
        <taxon>Chlorobiia</taxon>
        <taxon>Chlorobiales</taxon>
        <taxon>Chlorobiaceae</taxon>
        <taxon>Prosthecochloris</taxon>
    </lineage>
</organism>
<reference key="1">
    <citation type="submission" date="2008-06" db="EMBL/GenBank/DDBJ databases">
        <title>Complete sequence of chromosome of Prosthecochloris aestuarii DSM 271.</title>
        <authorList>
            <consortium name="US DOE Joint Genome Institute"/>
            <person name="Lucas S."/>
            <person name="Copeland A."/>
            <person name="Lapidus A."/>
            <person name="Glavina del Rio T."/>
            <person name="Dalin E."/>
            <person name="Tice H."/>
            <person name="Bruce D."/>
            <person name="Goodwin L."/>
            <person name="Pitluck S."/>
            <person name="Schmutz J."/>
            <person name="Larimer F."/>
            <person name="Land M."/>
            <person name="Hauser L."/>
            <person name="Kyrpides N."/>
            <person name="Anderson I."/>
            <person name="Liu Z."/>
            <person name="Li T."/>
            <person name="Zhao F."/>
            <person name="Overmann J."/>
            <person name="Bryant D.A."/>
            <person name="Richardson P."/>
        </authorList>
    </citation>
    <scope>NUCLEOTIDE SEQUENCE [LARGE SCALE GENOMIC DNA]</scope>
    <source>
        <strain>DSM 271 / SK 413</strain>
    </source>
</reference>
<name>HIS6_PROA2</name>
<protein>
    <recommendedName>
        <fullName evidence="1">Imidazole glycerol phosphate synthase subunit HisF</fullName>
        <ecNumber evidence="1">4.3.2.10</ecNumber>
    </recommendedName>
    <alternativeName>
        <fullName evidence="1">IGP synthase cyclase subunit</fullName>
    </alternativeName>
    <alternativeName>
        <fullName evidence="1">IGP synthase subunit HisF</fullName>
    </alternativeName>
    <alternativeName>
        <fullName evidence="1">ImGP synthase subunit HisF</fullName>
        <shortName evidence="1">IGPS subunit HisF</shortName>
    </alternativeName>
</protein>
<evidence type="ECO:0000255" key="1">
    <source>
        <dbReference type="HAMAP-Rule" id="MF_01013"/>
    </source>
</evidence>
<comment type="function">
    <text evidence="1">IGPS catalyzes the conversion of PRFAR and glutamine to IGP, AICAR and glutamate. The HisF subunit catalyzes the cyclization activity that produces IGP and AICAR from PRFAR using the ammonia provided by the HisH subunit.</text>
</comment>
<comment type="catalytic activity">
    <reaction evidence="1">
        <text>5-[(5-phospho-1-deoxy-D-ribulos-1-ylimino)methylamino]-1-(5-phospho-beta-D-ribosyl)imidazole-4-carboxamide + L-glutamine = D-erythro-1-(imidazol-4-yl)glycerol 3-phosphate + 5-amino-1-(5-phospho-beta-D-ribosyl)imidazole-4-carboxamide + L-glutamate + H(+)</text>
        <dbReference type="Rhea" id="RHEA:24793"/>
        <dbReference type="ChEBI" id="CHEBI:15378"/>
        <dbReference type="ChEBI" id="CHEBI:29985"/>
        <dbReference type="ChEBI" id="CHEBI:58278"/>
        <dbReference type="ChEBI" id="CHEBI:58359"/>
        <dbReference type="ChEBI" id="CHEBI:58475"/>
        <dbReference type="ChEBI" id="CHEBI:58525"/>
        <dbReference type="EC" id="4.3.2.10"/>
    </reaction>
</comment>
<comment type="pathway">
    <text evidence="1">Amino-acid biosynthesis; L-histidine biosynthesis; L-histidine from 5-phospho-alpha-D-ribose 1-diphosphate: step 5/9.</text>
</comment>
<comment type="subunit">
    <text evidence="1">Heterodimer of HisH and HisF.</text>
</comment>
<comment type="subcellular location">
    <subcellularLocation>
        <location evidence="1">Cytoplasm</location>
    </subcellularLocation>
</comment>
<comment type="similarity">
    <text evidence="1">Belongs to the HisA/HisF family.</text>
</comment>
<sequence length="251" mass="27210">MLAKRIIPCLDVRDGRVVKGINFEGLRDAGSILEQARFYNGELADELVFLDISASLESRKTTLGEVLKVSEEVFIPLTVGGGISSVERAHDAFMHGADKVSVNTAAIATPELISRIAEKFGSQAVVVAIDVKKVGNDYIVHTHSGKKPTQYEAMEWAHKVEKLGAGEILLTSMDRDGTKSGYDNVILKAISTSVNIPVIASGGAGNLEHLYQGFAEGHADAALAASIFHFRQYSIREAKTYLRERGIVVRL</sequence>